<sequence length="445" mass="51636">MSVPIVETSLHYFVIYCSKLGQKEGTEHEKILFFYPPTINIGEQTNSVGISEAYVLFTKQFSPGQPCEFIHTKKSTLALLHPEEDIWMVLSVYNPTGITGKDNKREYIEDEVDDIILMKTIQQIYQTWQTFNGSIMSLASKTSYDNVRKRLESFVKPYIQQIQFDQLDLFTSLDGIKFLPLNKNVYLTIFGYINSVDLHFQSTLSSFRFGLVLYKDNLILSSLEQNETRILYNYLINMVKVGPDINSSNSMIVKNNSNNIPIWQTKGVRTGFMIQKDSLPMVWLGGKPQAMIVYEQKDTFLLFLIDPSDLPQLPFEDLSASLVQNFEFVNLTLEQHYAKKANFDEQYKYIYFNQMNLAIRSPIKPKGPELNKETMKLLNEIHADFEGGLSSEIIVKTQQDRWIVAKKIDFREFYIMFDNKNSSILEINEEVKNATTKFFKFLFTD</sequence>
<accession>Q54IQ5</accession>
<proteinExistence type="inferred from homology"/>
<protein>
    <recommendedName>
        <fullName>Vacuolar fusion protein CCZ1 homolog</fullName>
    </recommendedName>
</protein>
<dbReference type="EMBL" id="AAFI02000117">
    <property type="protein sequence ID" value="EAL63154.1"/>
    <property type="molecule type" value="Genomic_DNA"/>
</dbReference>
<dbReference type="RefSeq" id="XP_636659.1">
    <property type="nucleotide sequence ID" value="XM_631567.1"/>
</dbReference>
<dbReference type="SMR" id="Q54IQ5"/>
<dbReference type="FunCoup" id="Q54IQ5">
    <property type="interactions" value="198"/>
</dbReference>
<dbReference type="STRING" id="44689.Q54IQ5"/>
<dbReference type="PaxDb" id="44689-DDB0305148"/>
<dbReference type="EnsemblProtists" id="EAL63154">
    <property type="protein sequence ID" value="EAL63154"/>
    <property type="gene ID" value="DDB_G0288589"/>
</dbReference>
<dbReference type="GeneID" id="8626705"/>
<dbReference type="KEGG" id="ddi:DDB_G0288589"/>
<dbReference type="dictyBase" id="DDB_G0288589"/>
<dbReference type="VEuPathDB" id="AmoebaDB:DDB_G0288589"/>
<dbReference type="eggNOG" id="KOG2622">
    <property type="taxonomic scope" value="Eukaryota"/>
</dbReference>
<dbReference type="HOGENOM" id="CLU_037828_2_0_1"/>
<dbReference type="InParanoid" id="Q54IQ5"/>
<dbReference type="OMA" id="DCQALHT"/>
<dbReference type="PhylomeDB" id="Q54IQ5"/>
<dbReference type="Reactome" id="R-DDI-8876198">
    <property type="pathway name" value="RAB GEFs exchange GTP for GDP on RABs"/>
</dbReference>
<dbReference type="PRO" id="PR:Q54IQ5"/>
<dbReference type="Proteomes" id="UP000002195">
    <property type="component" value="Chromosome 5"/>
</dbReference>
<dbReference type="GO" id="GO:0043231">
    <property type="term" value="C:intracellular membrane-bounded organelle"/>
    <property type="evidence" value="ECO:0000318"/>
    <property type="project" value="GO_Central"/>
</dbReference>
<dbReference type="GO" id="GO:0035658">
    <property type="term" value="C:Mon1-Ccz1 complex"/>
    <property type="evidence" value="ECO:0007669"/>
    <property type="project" value="InterPro"/>
</dbReference>
<dbReference type="GO" id="GO:0016192">
    <property type="term" value="P:vesicle-mediated transport"/>
    <property type="evidence" value="ECO:0000318"/>
    <property type="project" value="GO_Central"/>
</dbReference>
<dbReference type="InterPro" id="IPR013176">
    <property type="entry name" value="Ccz1"/>
</dbReference>
<dbReference type="InterPro" id="IPR043987">
    <property type="entry name" value="CCZ1/INTU/HSP4_longin_1"/>
</dbReference>
<dbReference type="InterPro" id="IPR043989">
    <property type="entry name" value="CCZ1/INTU/HSP4_longin_3"/>
</dbReference>
<dbReference type="PANTHER" id="PTHR13056">
    <property type="entry name" value="VACUOLAR FUSION PROTEIN CCZ1 HOMOLOG-RELATED"/>
    <property type="match status" value="1"/>
</dbReference>
<dbReference type="PANTHER" id="PTHR13056:SF0">
    <property type="entry name" value="VACUOLAR FUSION PROTEIN CCZ1 HOMOLOG-RELATED"/>
    <property type="match status" value="1"/>
</dbReference>
<dbReference type="Pfam" id="PF19031">
    <property type="entry name" value="Intu_longin_1"/>
    <property type="match status" value="1"/>
</dbReference>
<dbReference type="Pfam" id="PF19033">
    <property type="entry name" value="Intu_longin_3"/>
    <property type="match status" value="1"/>
</dbReference>
<gene>
    <name type="ORF">DDB_G0288589</name>
</gene>
<organism>
    <name type="scientific">Dictyostelium discoideum</name>
    <name type="common">Social amoeba</name>
    <dbReference type="NCBI Taxonomy" id="44689"/>
    <lineage>
        <taxon>Eukaryota</taxon>
        <taxon>Amoebozoa</taxon>
        <taxon>Evosea</taxon>
        <taxon>Eumycetozoa</taxon>
        <taxon>Dictyostelia</taxon>
        <taxon>Dictyosteliales</taxon>
        <taxon>Dictyosteliaceae</taxon>
        <taxon>Dictyostelium</taxon>
    </lineage>
</organism>
<comment type="similarity">
    <text evidence="1">Belongs to the CCZ1 family.</text>
</comment>
<name>CCZ1_DICDI</name>
<feature type="chain" id="PRO_0000327406" description="Vacuolar fusion protein CCZ1 homolog">
    <location>
        <begin position="1"/>
        <end position="445"/>
    </location>
</feature>
<keyword id="KW-1185">Reference proteome</keyword>
<evidence type="ECO:0000305" key="1"/>
<reference key="1">
    <citation type="journal article" date="2005" name="Nature">
        <title>The genome of the social amoeba Dictyostelium discoideum.</title>
        <authorList>
            <person name="Eichinger L."/>
            <person name="Pachebat J.A."/>
            <person name="Gloeckner G."/>
            <person name="Rajandream M.A."/>
            <person name="Sucgang R."/>
            <person name="Berriman M."/>
            <person name="Song J."/>
            <person name="Olsen R."/>
            <person name="Szafranski K."/>
            <person name="Xu Q."/>
            <person name="Tunggal B."/>
            <person name="Kummerfeld S."/>
            <person name="Madera M."/>
            <person name="Konfortov B.A."/>
            <person name="Rivero F."/>
            <person name="Bankier A.T."/>
            <person name="Lehmann R."/>
            <person name="Hamlin N."/>
            <person name="Davies R."/>
            <person name="Gaudet P."/>
            <person name="Fey P."/>
            <person name="Pilcher K."/>
            <person name="Chen G."/>
            <person name="Saunders D."/>
            <person name="Sodergren E.J."/>
            <person name="Davis P."/>
            <person name="Kerhornou A."/>
            <person name="Nie X."/>
            <person name="Hall N."/>
            <person name="Anjard C."/>
            <person name="Hemphill L."/>
            <person name="Bason N."/>
            <person name="Farbrother P."/>
            <person name="Desany B."/>
            <person name="Just E."/>
            <person name="Morio T."/>
            <person name="Rost R."/>
            <person name="Churcher C.M."/>
            <person name="Cooper J."/>
            <person name="Haydock S."/>
            <person name="van Driessche N."/>
            <person name="Cronin A."/>
            <person name="Goodhead I."/>
            <person name="Muzny D.M."/>
            <person name="Mourier T."/>
            <person name="Pain A."/>
            <person name="Lu M."/>
            <person name="Harper D."/>
            <person name="Lindsay R."/>
            <person name="Hauser H."/>
            <person name="James K.D."/>
            <person name="Quiles M."/>
            <person name="Madan Babu M."/>
            <person name="Saito T."/>
            <person name="Buchrieser C."/>
            <person name="Wardroper A."/>
            <person name="Felder M."/>
            <person name="Thangavelu M."/>
            <person name="Johnson D."/>
            <person name="Knights A."/>
            <person name="Loulseged H."/>
            <person name="Mungall K.L."/>
            <person name="Oliver K."/>
            <person name="Price C."/>
            <person name="Quail M.A."/>
            <person name="Urushihara H."/>
            <person name="Hernandez J."/>
            <person name="Rabbinowitsch E."/>
            <person name="Steffen D."/>
            <person name="Sanders M."/>
            <person name="Ma J."/>
            <person name="Kohara Y."/>
            <person name="Sharp S."/>
            <person name="Simmonds M.N."/>
            <person name="Spiegler S."/>
            <person name="Tivey A."/>
            <person name="Sugano S."/>
            <person name="White B."/>
            <person name="Walker D."/>
            <person name="Woodward J.R."/>
            <person name="Winckler T."/>
            <person name="Tanaka Y."/>
            <person name="Shaulsky G."/>
            <person name="Schleicher M."/>
            <person name="Weinstock G.M."/>
            <person name="Rosenthal A."/>
            <person name="Cox E.C."/>
            <person name="Chisholm R.L."/>
            <person name="Gibbs R.A."/>
            <person name="Loomis W.F."/>
            <person name="Platzer M."/>
            <person name="Kay R.R."/>
            <person name="Williams J.G."/>
            <person name="Dear P.H."/>
            <person name="Noegel A.A."/>
            <person name="Barrell B.G."/>
            <person name="Kuspa A."/>
        </authorList>
    </citation>
    <scope>NUCLEOTIDE SEQUENCE [LARGE SCALE GENOMIC DNA]</scope>
    <source>
        <strain>AX4</strain>
    </source>
</reference>